<feature type="chain" id="PRO_0000462281" description="Cell envelope integrity protein Cei">
    <location>
        <begin position="1"/>
        <end position="216"/>
    </location>
</feature>
<feature type="transmembrane region" description="Helical" evidence="1">
    <location>
        <begin position="25"/>
        <end position="45"/>
    </location>
</feature>
<protein>
    <recommendedName>
        <fullName evidence="3">Cell envelope integrity protein Cei</fullName>
    </recommendedName>
</protein>
<name>CEI_MYCTU</name>
<dbReference type="EMBL" id="AL123456">
    <property type="protein sequence ID" value="CCP45498.1"/>
    <property type="molecule type" value="Genomic_DNA"/>
</dbReference>
<dbReference type="RefSeq" id="NP_217216.1">
    <property type="nucleotide sequence ID" value="NC_000962.3"/>
</dbReference>
<dbReference type="SMR" id="I6Y1I5"/>
<dbReference type="STRING" id="83332.Rv2700"/>
<dbReference type="PaxDb" id="83332-Rv2700"/>
<dbReference type="DNASU" id="887405"/>
<dbReference type="GeneID" id="887405"/>
<dbReference type="KEGG" id="mtu:Rv2700"/>
<dbReference type="KEGG" id="mtv:RVBD_2700"/>
<dbReference type="PATRIC" id="fig|83332.111.peg.3006"/>
<dbReference type="TubercuList" id="Rv2700"/>
<dbReference type="eggNOG" id="ENOG5032WRF">
    <property type="taxonomic scope" value="Bacteria"/>
</dbReference>
<dbReference type="InParanoid" id="I6Y1I5"/>
<dbReference type="OrthoDB" id="5194885at2"/>
<dbReference type="Proteomes" id="UP000001584">
    <property type="component" value="Chromosome"/>
</dbReference>
<dbReference type="GO" id="GO:0016020">
    <property type="term" value="C:membrane"/>
    <property type="evidence" value="ECO:0007669"/>
    <property type="project" value="UniProtKB-KW"/>
</dbReference>
<dbReference type="Gene3D" id="3.30.70.2390">
    <property type="match status" value="1"/>
</dbReference>
<dbReference type="InterPro" id="IPR027381">
    <property type="entry name" value="LytR/CpsA/Psr_C"/>
</dbReference>
<dbReference type="NCBIfam" id="NF035953">
    <property type="entry name" value="integrity_Cei"/>
    <property type="match status" value="1"/>
</dbReference>
<dbReference type="Pfam" id="PF13399">
    <property type="entry name" value="LytR_C"/>
    <property type="match status" value="1"/>
</dbReference>
<reference evidence="5" key="1">
    <citation type="journal article" date="1998" name="Nature">
        <title>Deciphering the biology of Mycobacterium tuberculosis from the complete genome sequence.</title>
        <authorList>
            <person name="Cole S.T."/>
            <person name="Brosch R."/>
            <person name="Parkhill J."/>
            <person name="Garnier T."/>
            <person name="Churcher C.M."/>
            <person name="Harris D.E."/>
            <person name="Gordon S.V."/>
            <person name="Eiglmeier K."/>
            <person name="Gas S."/>
            <person name="Barry C.E. III"/>
            <person name="Tekaia F."/>
            <person name="Badcock K."/>
            <person name="Basham D."/>
            <person name="Brown D."/>
            <person name="Chillingworth T."/>
            <person name="Connor R."/>
            <person name="Davies R.M."/>
            <person name="Devlin K."/>
            <person name="Feltwell T."/>
            <person name="Gentles S."/>
            <person name="Hamlin N."/>
            <person name="Holroyd S."/>
            <person name="Hornsby T."/>
            <person name="Jagels K."/>
            <person name="Krogh A."/>
            <person name="McLean J."/>
            <person name="Moule S."/>
            <person name="Murphy L.D."/>
            <person name="Oliver S."/>
            <person name="Osborne J."/>
            <person name="Quail M.A."/>
            <person name="Rajandream M.A."/>
            <person name="Rogers J."/>
            <person name="Rutter S."/>
            <person name="Seeger K."/>
            <person name="Skelton S."/>
            <person name="Squares S."/>
            <person name="Squares R."/>
            <person name="Sulston J.E."/>
            <person name="Taylor K."/>
            <person name="Whitehead S."/>
            <person name="Barrell B.G."/>
        </authorList>
    </citation>
    <scope>NUCLEOTIDE SEQUENCE [LARGE SCALE GENOMIC DNA]</scope>
    <source>
        <strain>ATCC 25618 / H37Rv</strain>
    </source>
</reference>
<reference key="2">
    <citation type="journal article" date="2011" name="Mol. Cell. Proteomics">
        <title>Proteogenomic analysis of Mycobacterium tuberculosis by high resolution mass spectrometry.</title>
        <authorList>
            <person name="Kelkar D.S."/>
            <person name="Kumar D."/>
            <person name="Kumar P."/>
            <person name="Balakrishnan L."/>
            <person name="Muthusamy B."/>
            <person name="Yadav A.K."/>
            <person name="Shrivastava P."/>
            <person name="Marimuthu A."/>
            <person name="Anand S."/>
            <person name="Sundaram H."/>
            <person name="Kingsbury R."/>
            <person name="Harsha H.C."/>
            <person name="Nair B."/>
            <person name="Prasad T.S."/>
            <person name="Chauhan D.S."/>
            <person name="Katoch K."/>
            <person name="Katoch V.M."/>
            <person name="Kumar P."/>
            <person name="Chaerkady R."/>
            <person name="Ramachandran S."/>
            <person name="Dash D."/>
            <person name="Pandey A."/>
        </authorList>
    </citation>
    <scope>IDENTIFICATION BY MASS SPECTROMETRY [LARGE SCALE ANALYSIS]</scope>
    <source>
        <strain>ATCC 25618 / H37Rv</strain>
    </source>
</reference>
<reference key="3">
    <citation type="journal article" date="2019" name="J. Bacteriol.">
        <title>Mycobacterium tuberculosis Rv2700 Contributes to Cell Envelope Integrity and Virulence.</title>
        <authorList>
            <person name="Ballister E.R."/>
            <person name="Samanovic M.I."/>
            <person name="Darwin K.H."/>
        </authorList>
    </citation>
    <scope>FUNCTION</scope>
    <scope>DISRUPTION PHENOTYPE</scope>
    <source>
        <strain>H37Rv</strain>
    </source>
</reference>
<organism>
    <name type="scientific">Mycobacterium tuberculosis (strain ATCC 25618 / H37Rv)</name>
    <dbReference type="NCBI Taxonomy" id="83332"/>
    <lineage>
        <taxon>Bacteria</taxon>
        <taxon>Bacillati</taxon>
        <taxon>Actinomycetota</taxon>
        <taxon>Actinomycetes</taxon>
        <taxon>Mycobacteriales</taxon>
        <taxon>Mycobacteriaceae</taxon>
        <taxon>Mycobacterium</taxon>
        <taxon>Mycobacterium tuberculosis complex</taxon>
    </lineage>
</organism>
<accession>I6Y1I5</accession>
<evidence type="ECO:0000255" key="1"/>
<evidence type="ECO:0000269" key="2">
    <source>
    </source>
</evidence>
<evidence type="ECO:0000303" key="3">
    <source>
    </source>
</evidence>
<evidence type="ECO:0000305" key="4"/>
<evidence type="ECO:0000312" key="5">
    <source>
        <dbReference type="EMBL" id="CCP45498.1"/>
    </source>
</evidence>
<sequence length="216" mass="22660">MVAQITEGTAFDKHGRPFRRRNPRPAIVVVAFLVVVTCVMWTLALTRPPDVREAAVCNPPPQPAGSAPTNLGEQVSRTDMTDVAPAKLSDTKVHVLNASGRGGQAADIAGALQDLGFAQPTAANDPIYAGTRLDCQGQIRFGTAGQATAAALWLVAPCTELYHDSRADDSVDLALGTDFTTLAHNDDIDAVLANLRPGATEPSDPALLAKIHANSC</sequence>
<comment type="function">
    <text evidence="2">Contributes to cell envelope integrity and virulence.</text>
</comment>
<comment type="subcellular location">
    <subcellularLocation>
        <location evidence="4">Cell membrane</location>
        <topology evidence="1">Single-pass membrane protein</topology>
    </subcellularLocation>
</comment>
<comment type="disruption phenotype">
    <text evidence="2">Loss of the gene results in increased sensitivity to nitric oxide (NO) and lower growth rates at low densities in rich media (PubMed:31285241). The mutant has substantially increased sensitivity to two distinct antibiotics that inhibit peptidoglycan cross-linking (vancomycin and meropenem) and to rifampicin (PubMed:31285241). It also shows increased cell envelope permeability (PubMed:31285241). The mutant is highly attenuated in mice (PubMed:31285241).</text>
</comment>
<keyword id="KW-1003">Cell membrane</keyword>
<keyword id="KW-0472">Membrane</keyword>
<keyword id="KW-1185">Reference proteome</keyword>
<keyword id="KW-0812">Transmembrane</keyword>
<keyword id="KW-1133">Transmembrane helix</keyword>
<keyword id="KW-0843">Virulence</keyword>
<gene>
    <name evidence="3" type="primary">cei</name>
    <name evidence="5" type="ordered locus">Rv2700</name>
</gene>
<proteinExistence type="evidence at protein level"/>